<feature type="chain" id="PRO_1000009545" description="tRNA-specific 2-thiouridylase MnmA">
    <location>
        <begin position="1"/>
        <end position="363"/>
    </location>
</feature>
<feature type="region of interest" description="Interaction with tRNA" evidence="1">
    <location>
        <begin position="143"/>
        <end position="145"/>
    </location>
</feature>
<feature type="active site" description="Nucleophile" evidence="1">
    <location>
        <position position="101"/>
    </location>
</feature>
<feature type="active site" description="Cysteine persulfide intermediate" evidence="1">
    <location>
        <position position="193"/>
    </location>
</feature>
<feature type="binding site" evidence="1">
    <location>
        <begin position="6"/>
        <end position="13"/>
    </location>
    <ligand>
        <name>ATP</name>
        <dbReference type="ChEBI" id="CHEBI:30616"/>
    </ligand>
</feature>
<feature type="binding site" evidence="1">
    <location>
        <position position="32"/>
    </location>
    <ligand>
        <name>ATP</name>
        <dbReference type="ChEBI" id="CHEBI:30616"/>
    </ligand>
</feature>
<feature type="binding site" evidence="1">
    <location>
        <position position="125"/>
    </location>
    <ligand>
        <name>ATP</name>
        <dbReference type="ChEBI" id="CHEBI:30616"/>
    </ligand>
</feature>
<feature type="site" description="Interaction with tRNA" evidence="1">
    <location>
        <position position="126"/>
    </location>
</feature>
<feature type="site" description="Interaction with tRNA" evidence="1">
    <location>
        <position position="333"/>
    </location>
</feature>
<feature type="disulfide bond" description="Alternate" evidence="1">
    <location>
        <begin position="101"/>
        <end position="193"/>
    </location>
</feature>
<evidence type="ECO:0000255" key="1">
    <source>
        <dbReference type="HAMAP-Rule" id="MF_00144"/>
    </source>
</evidence>
<accession>A0PPW5</accession>
<reference key="1">
    <citation type="journal article" date="2007" name="Genome Res.">
        <title>Reductive evolution and niche adaptation inferred from the genome of Mycobacterium ulcerans, the causative agent of Buruli ulcer.</title>
        <authorList>
            <person name="Stinear T.P."/>
            <person name="Seemann T."/>
            <person name="Pidot S."/>
            <person name="Frigui W."/>
            <person name="Reysset G."/>
            <person name="Garnier T."/>
            <person name="Meurice G."/>
            <person name="Simon D."/>
            <person name="Bouchier C."/>
            <person name="Ma L."/>
            <person name="Tichit M."/>
            <person name="Porter J.L."/>
            <person name="Ryan J."/>
            <person name="Johnson P.D.R."/>
            <person name="Davies J.K."/>
            <person name="Jenkin G.A."/>
            <person name="Small P.L.C."/>
            <person name="Jones L.M."/>
            <person name="Tekaia F."/>
            <person name="Laval F."/>
            <person name="Daffe M."/>
            <person name="Parkhill J."/>
            <person name="Cole S.T."/>
        </authorList>
    </citation>
    <scope>NUCLEOTIDE SEQUENCE [LARGE SCALE GENOMIC DNA]</scope>
    <source>
        <strain>Agy99</strain>
    </source>
</reference>
<proteinExistence type="inferred from homology"/>
<comment type="function">
    <text evidence="1">Catalyzes the 2-thiolation of uridine at the wobble position (U34) of tRNA, leading to the formation of s(2)U34.</text>
</comment>
<comment type="catalytic activity">
    <reaction evidence="1">
        <text>S-sulfanyl-L-cysteinyl-[protein] + uridine(34) in tRNA + AH2 + ATP = 2-thiouridine(34) in tRNA + L-cysteinyl-[protein] + A + AMP + diphosphate + H(+)</text>
        <dbReference type="Rhea" id="RHEA:47032"/>
        <dbReference type="Rhea" id="RHEA-COMP:10131"/>
        <dbReference type="Rhea" id="RHEA-COMP:11726"/>
        <dbReference type="Rhea" id="RHEA-COMP:11727"/>
        <dbReference type="Rhea" id="RHEA-COMP:11728"/>
        <dbReference type="ChEBI" id="CHEBI:13193"/>
        <dbReference type="ChEBI" id="CHEBI:15378"/>
        <dbReference type="ChEBI" id="CHEBI:17499"/>
        <dbReference type="ChEBI" id="CHEBI:29950"/>
        <dbReference type="ChEBI" id="CHEBI:30616"/>
        <dbReference type="ChEBI" id="CHEBI:33019"/>
        <dbReference type="ChEBI" id="CHEBI:61963"/>
        <dbReference type="ChEBI" id="CHEBI:65315"/>
        <dbReference type="ChEBI" id="CHEBI:87170"/>
        <dbReference type="ChEBI" id="CHEBI:456215"/>
        <dbReference type="EC" id="2.8.1.13"/>
    </reaction>
</comment>
<comment type="subcellular location">
    <subcellularLocation>
        <location evidence="1">Cytoplasm</location>
    </subcellularLocation>
</comment>
<comment type="similarity">
    <text evidence="1">Belongs to the MnmA/TRMU family.</text>
</comment>
<organism>
    <name type="scientific">Mycobacterium ulcerans (strain Agy99)</name>
    <dbReference type="NCBI Taxonomy" id="362242"/>
    <lineage>
        <taxon>Bacteria</taxon>
        <taxon>Bacillati</taxon>
        <taxon>Actinomycetota</taxon>
        <taxon>Actinomycetes</taxon>
        <taxon>Mycobacteriales</taxon>
        <taxon>Mycobacteriaceae</taxon>
        <taxon>Mycobacterium</taxon>
        <taxon>Mycobacterium ulcerans group</taxon>
    </lineage>
</organism>
<protein>
    <recommendedName>
        <fullName evidence="1">tRNA-specific 2-thiouridylase MnmA</fullName>
        <ecNumber evidence="1">2.8.1.13</ecNumber>
    </recommendedName>
</protein>
<sequence length="363" mass="38263">MKVLAAMSGGVDSSVAAARMVDAGHDVVGVHLALSTAPGALRTGSRGCCSKEDASDARRVADVLGIPFYVWDFAERFKEDVIDDFVSSYARGETPNPCIRCNQRIKFSALYAKALALGFDVVVTGHYARLSEGRLRRAVDQDKDQSYVLAVLTAEQLRHAMFPIGDTPKPQIREEASRRGLAVADKPDSHDICFIPSGNTQTFLGERIGVRRGTVVDAAGAVLATHDGVHGFTIGQRKGLGIPGPGPDGRPRYVTAIDAETGTVRVGDVADLQVHALTGRAPIFTAGTAPTGPLECAVQVRAHGETTSAVAELVGDELSVRLHSPLRGVARGQTLVLYRPDPDGDEVLGSATITATSACSPVS</sequence>
<gene>
    <name evidence="1" type="primary">mnmA</name>
    <name type="synonym">trmU</name>
    <name type="ordered locus">MUL_1928</name>
</gene>
<keyword id="KW-0067">ATP-binding</keyword>
<keyword id="KW-0963">Cytoplasm</keyword>
<keyword id="KW-1015">Disulfide bond</keyword>
<keyword id="KW-0547">Nucleotide-binding</keyword>
<keyword id="KW-0694">RNA-binding</keyword>
<keyword id="KW-0808">Transferase</keyword>
<keyword id="KW-0819">tRNA processing</keyword>
<keyword id="KW-0820">tRNA-binding</keyword>
<name>MNMA_MYCUA</name>
<dbReference type="EC" id="2.8.1.13" evidence="1"/>
<dbReference type="EMBL" id="CP000325">
    <property type="protein sequence ID" value="ABL04384.1"/>
    <property type="molecule type" value="Genomic_DNA"/>
</dbReference>
<dbReference type="SMR" id="A0PPW5"/>
<dbReference type="KEGG" id="mul:MUL_1928"/>
<dbReference type="eggNOG" id="COG0482">
    <property type="taxonomic scope" value="Bacteria"/>
</dbReference>
<dbReference type="HOGENOM" id="CLU_035188_0_2_11"/>
<dbReference type="Proteomes" id="UP000000765">
    <property type="component" value="Chromosome"/>
</dbReference>
<dbReference type="GO" id="GO:0005737">
    <property type="term" value="C:cytoplasm"/>
    <property type="evidence" value="ECO:0007669"/>
    <property type="project" value="UniProtKB-SubCell"/>
</dbReference>
<dbReference type="GO" id="GO:0005524">
    <property type="term" value="F:ATP binding"/>
    <property type="evidence" value="ECO:0007669"/>
    <property type="project" value="UniProtKB-KW"/>
</dbReference>
<dbReference type="GO" id="GO:0000049">
    <property type="term" value="F:tRNA binding"/>
    <property type="evidence" value="ECO:0007669"/>
    <property type="project" value="UniProtKB-KW"/>
</dbReference>
<dbReference type="GO" id="GO:0103016">
    <property type="term" value="F:tRNA-uridine 2-sulfurtransferase activity"/>
    <property type="evidence" value="ECO:0007669"/>
    <property type="project" value="UniProtKB-EC"/>
</dbReference>
<dbReference type="GO" id="GO:0002143">
    <property type="term" value="P:tRNA wobble position uridine thiolation"/>
    <property type="evidence" value="ECO:0007669"/>
    <property type="project" value="TreeGrafter"/>
</dbReference>
<dbReference type="CDD" id="cd01998">
    <property type="entry name" value="MnmA_TRMU-like"/>
    <property type="match status" value="1"/>
</dbReference>
<dbReference type="FunFam" id="3.40.50.620:FF:000057">
    <property type="entry name" value="tRNA-specific 2-thiouridylase MnmA"/>
    <property type="match status" value="1"/>
</dbReference>
<dbReference type="Gene3D" id="2.30.30.280">
    <property type="entry name" value="Adenine nucleotide alpha hydrolases-like domains"/>
    <property type="match status" value="1"/>
</dbReference>
<dbReference type="Gene3D" id="3.40.50.620">
    <property type="entry name" value="HUPs"/>
    <property type="match status" value="1"/>
</dbReference>
<dbReference type="Gene3D" id="2.40.30.10">
    <property type="entry name" value="Translation factors"/>
    <property type="match status" value="1"/>
</dbReference>
<dbReference type="HAMAP" id="MF_00144">
    <property type="entry name" value="tRNA_thiouridyl_MnmA"/>
    <property type="match status" value="1"/>
</dbReference>
<dbReference type="InterPro" id="IPR004506">
    <property type="entry name" value="MnmA-like"/>
</dbReference>
<dbReference type="InterPro" id="IPR046885">
    <property type="entry name" value="MnmA-like_C"/>
</dbReference>
<dbReference type="InterPro" id="IPR046884">
    <property type="entry name" value="MnmA-like_central"/>
</dbReference>
<dbReference type="InterPro" id="IPR023382">
    <property type="entry name" value="MnmA-like_central_sf"/>
</dbReference>
<dbReference type="InterPro" id="IPR014729">
    <property type="entry name" value="Rossmann-like_a/b/a_fold"/>
</dbReference>
<dbReference type="NCBIfam" id="NF001138">
    <property type="entry name" value="PRK00143.1"/>
    <property type="match status" value="1"/>
</dbReference>
<dbReference type="NCBIfam" id="TIGR00420">
    <property type="entry name" value="trmU"/>
    <property type="match status" value="1"/>
</dbReference>
<dbReference type="PANTHER" id="PTHR11933:SF5">
    <property type="entry name" value="MITOCHONDRIAL TRNA-SPECIFIC 2-THIOURIDYLASE 1"/>
    <property type="match status" value="1"/>
</dbReference>
<dbReference type="PANTHER" id="PTHR11933">
    <property type="entry name" value="TRNA 5-METHYLAMINOMETHYL-2-THIOURIDYLATE -METHYLTRANSFERASE"/>
    <property type="match status" value="1"/>
</dbReference>
<dbReference type="Pfam" id="PF03054">
    <property type="entry name" value="tRNA_Me_trans"/>
    <property type="match status" value="1"/>
</dbReference>
<dbReference type="Pfam" id="PF20258">
    <property type="entry name" value="tRNA_Me_trans_C"/>
    <property type="match status" value="1"/>
</dbReference>
<dbReference type="Pfam" id="PF20259">
    <property type="entry name" value="tRNA_Me_trans_M"/>
    <property type="match status" value="1"/>
</dbReference>
<dbReference type="SUPFAM" id="SSF52402">
    <property type="entry name" value="Adenine nucleotide alpha hydrolases-like"/>
    <property type="match status" value="1"/>
</dbReference>